<proteinExistence type="inferred from homology"/>
<feature type="chain" id="PRO_1000093643" description="DNA mismatch repair protein MutS">
    <location>
        <begin position="1"/>
        <end position="855"/>
    </location>
</feature>
<feature type="binding site" evidence="1">
    <location>
        <begin position="616"/>
        <end position="623"/>
    </location>
    <ligand>
        <name>ATP</name>
        <dbReference type="ChEBI" id="CHEBI:30616"/>
    </ligand>
</feature>
<protein>
    <recommendedName>
        <fullName evidence="1">DNA mismatch repair protein MutS</fullName>
    </recommendedName>
</protein>
<accession>B4TFU6</accession>
<gene>
    <name evidence="1" type="primary">mutS</name>
    <name type="ordered locus">SeHA_C3098</name>
</gene>
<sequence>MNESFDKDFSNHTPMMQQYLKLKAQHPEILLFYRMGDFYELFYDDAKRASQLLDISLTKRGASAGEPIPMAGIPHHAVENYLAKLVNQGESVAICEQIGDPATSKGPVERKVVRIVTPGTISDEALLQERQDNLLAAIWQDGKGYGYATLDISSGRFRLSEPADRETMAAELQRTNPAELLYAEDFAEMALIEGRRGLRRRPLWEFEIDTARQQLNLQFGTRDLVGFGVENASRGLCAAGCLLQYVKDTQRTSLPHIRSITMERQQDSIIMDAATRRNLEITQNLAGGVENTLAAVLDCTVTPMGSRMLKRWLHMPVRNTDILRERQQTIGALQDTVSELQPVLRQVGDLERILARLALRTARPRDLARMRHAFQQLPELHAQLETVDSAPVQALRKKMGDFAELRDLLERAIIDAPPVLVRDGGVIAPGYHEELDEWRALADGATDYLDRLEIRERERTGLDTLKVGYNAVHGYYIQISRGQSHLAPINYVRRQTLKNAERYIIPELKEYEDKVLTSKGKALALEKQLYDELFDLLLPHLADLQQSANALAELDVLVNLAERAWTLNYTCPTFTDKPGIRITEGRHPVVEQVLNEPFIANPLNLSPQRRMLIITGPNMGGKSTYMRQTALIALLAYIGSYVPAQNVEIGPIDRIFTRVGAADDLASGRSTFMVEMTETANILHNATENSLVLMDEIGRGTSTYDGLSLAWACAENLANKIKALTLFATHYFELTQLPEKMEGVANVHLDALEHGDTIAFMHSVQDGAASKSYGLAVAALAGVPKEVIKRARQKLRELESISPNAAATQVDGTQMSLLAAPEETSPAVEALENLDPDSLTPRQALEWIYRLKSLV</sequence>
<comment type="function">
    <text evidence="1">This protein is involved in the repair of mismatches in DNA. It is possible that it carries out the mismatch recognition step. This protein has a weak ATPase activity.</text>
</comment>
<comment type="similarity">
    <text evidence="1">Belongs to the DNA mismatch repair MutS family.</text>
</comment>
<organism>
    <name type="scientific">Salmonella heidelberg (strain SL476)</name>
    <dbReference type="NCBI Taxonomy" id="454169"/>
    <lineage>
        <taxon>Bacteria</taxon>
        <taxon>Pseudomonadati</taxon>
        <taxon>Pseudomonadota</taxon>
        <taxon>Gammaproteobacteria</taxon>
        <taxon>Enterobacterales</taxon>
        <taxon>Enterobacteriaceae</taxon>
        <taxon>Salmonella</taxon>
    </lineage>
</organism>
<name>MUTS_SALHS</name>
<reference key="1">
    <citation type="journal article" date="2011" name="J. Bacteriol.">
        <title>Comparative genomics of 28 Salmonella enterica isolates: evidence for CRISPR-mediated adaptive sublineage evolution.</title>
        <authorList>
            <person name="Fricke W.F."/>
            <person name="Mammel M.K."/>
            <person name="McDermott P.F."/>
            <person name="Tartera C."/>
            <person name="White D.G."/>
            <person name="Leclerc J.E."/>
            <person name="Ravel J."/>
            <person name="Cebula T.A."/>
        </authorList>
    </citation>
    <scope>NUCLEOTIDE SEQUENCE [LARGE SCALE GENOMIC DNA]</scope>
    <source>
        <strain>SL476</strain>
    </source>
</reference>
<evidence type="ECO:0000255" key="1">
    <source>
        <dbReference type="HAMAP-Rule" id="MF_00096"/>
    </source>
</evidence>
<keyword id="KW-0067">ATP-binding</keyword>
<keyword id="KW-0227">DNA damage</keyword>
<keyword id="KW-0234">DNA repair</keyword>
<keyword id="KW-0238">DNA-binding</keyword>
<keyword id="KW-0547">Nucleotide-binding</keyword>
<dbReference type="EMBL" id="CP001120">
    <property type="protein sequence ID" value="ACF68251.1"/>
    <property type="molecule type" value="Genomic_DNA"/>
</dbReference>
<dbReference type="RefSeq" id="WP_001005807.1">
    <property type="nucleotide sequence ID" value="NC_011083.1"/>
</dbReference>
<dbReference type="SMR" id="B4TFU6"/>
<dbReference type="KEGG" id="seh:SeHA_C3098"/>
<dbReference type="HOGENOM" id="CLU_002472_4_0_6"/>
<dbReference type="Proteomes" id="UP000001866">
    <property type="component" value="Chromosome"/>
</dbReference>
<dbReference type="GO" id="GO:0005829">
    <property type="term" value="C:cytosol"/>
    <property type="evidence" value="ECO:0007669"/>
    <property type="project" value="TreeGrafter"/>
</dbReference>
<dbReference type="GO" id="GO:0005524">
    <property type="term" value="F:ATP binding"/>
    <property type="evidence" value="ECO:0007669"/>
    <property type="project" value="UniProtKB-UniRule"/>
</dbReference>
<dbReference type="GO" id="GO:0140664">
    <property type="term" value="F:ATP-dependent DNA damage sensor activity"/>
    <property type="evidence" value="ECO:0007669"/>
    <property type="project" value="InterPro"/>
</dbReference>
<dbReference type="GO" id="GO:0003684">
    <property type="term" value="F:damaged DNA binding"/>
    <property type="evidence" value="ECO:0007669"/>
    <property type="project" value="UniProtKB-UniRule"/>
</dbReference>
<dbReference type="GO" id="GO:0030983">
    <property type="term" value="F:mismatched DNA binding"/>
    <property type="evidence" value="ECO:0007669"/>
    <property type="project" value="InterPro"/>
</dbReference>
<dbReference type="GO" id="GO:0006298">
    <property type="term" value="P:mismatch repair"/>
    <property type="evidence" value="ECO:0007669"/>
    <property type="project" value="UniProtKB-UniRule"/>
</dbReference>
<dbReference type="CDD" id="cd03284">
    <property type="entry name" value="ABC_MutS1"/>
    <property type="match status" value="1"/>
</dbReference>
<dbReference type="FunFam" id="1.10.1420.10:FF:000002">
    <property type="entry name" value="DNA mismatch repair protein MutS"/>
    <property type="match status" value="1"/>
</dbReference>
<dbReference type="FunFam" id="3.30.420.110:FF:000001">
    <property type="entry name" value="DNA mismatch repair protein MutS"/>
    <property type="match status" value="1"/>
</dbReference>
<dbReference type="FunFam" id="3.40.1170.10:FF:000001">
    <property type="entry name" value="DNA mismatch repair protein MutS"/>
    <property type="match status" value="1"/>
</dbReference>
<dbReference type="FunFam" id="3.40.50.300:FF:000283">
    <property type="entry name" value="DNA mismatch repair protein MutS"/>
    <property type="match status" value="1"/>
</dbReference>
<dbReference type="Gene3D" id="1.10.1420.10">
    <property type="match status" value="2"/>
</dbReference>
<dbReference type="Gene3D" id="6.10.140.430">
    <property type="match status" value="1"/>
</dbReference>
<dbReference type="Gene3D" id="3.40.1170.10">
    <property type="entry name" value="DNA repair protein MutS, domain I"/>
    <property type="match status" value="1"/>
</dbReference>
<dbReference type="Gene3D" id="3.30.420.110">
    <property type="entry name" value="MutS, connector domain"/>
    <property type="match status" value="1"/>
</dbReference>
<dbReference type="Gene3D" id="3.40.50.300">
    <property type="entry name" value="P-loop containing nucleotide triphosphate hydrolases"/>
    <property type="match status" value="1"/>
</dbReference>
<dbReference type="HAMAP" id="MF_00096">
    <property type="entry name" value="MutS"/>
    <property type="match status" value="1"/>
</dbReference>
<dbReference type="InterPro" id="IPR005748">
    <property type="entry name" value="DNA_mismatch_repair_MutS"/>
</dbReference>
<dbReference type="InterPro" id="IPR007695">
    <property type="entry name" value="DNA_mismatch_repair_MutS-lik_N"/>
</dbReference>
<dbReference type="InterPro" id="IPR017261">
    <property type="entry name" value="DNA_mismatch_repair_MutS/MSH"/>
</dbReference>
<dbReference type="InterPro" id="IPR000432">
    <property type="entry name" value="DNA_mismatch_repair_MutS_C"/>
</dbReference>
<dbReference type="InterPro" id="IPR007861">
    <property type="entry name" value="DNA_mismatch_repair_MutS_clamp"/>
</dbReference>
<dbReference type="InterPro" id="IPR007696">
    <property type="entry name" value="DNA_mismatch_repair_MutS_core"/>
</dbReference>
<dbReference type="InterPro" id="IPR016151">
    <property type="entry name" value="DNA_mismatch_repair_MutS_N"/>
</dbReference>
<dbReference type="InterPro" id="IPR036187">
    <property type="entry name" value="DNA_mismatch_repair_MutS_sf"/>
</dbReference>
<dbReference type="InterPro" id="IPR007860">
    <property type="entry name" value="DNA_mmatch_repair_MutS_con_dom"/>
</dbReference>
<dbReference type="InterPro" id="IPR045076">
    <property type="entry name" value="MutS"/>
</dbReference>
<dbReference type="InterPro" id="IPR036678">
    <property type="entry name" value="MutS_con_dom_sf"/>
</dbReference>
<dbReference type="InterPro" id="IPR027417">
    <property type="entry name" value="P-loop_NTPase"/>
</dbReference>
<dbReference type="NCBIfam" id="TIGR01070">
    <property type="entry name" value="mutS1"/>
    <property type="match status" value="1"/>
</dbReference>
<dbReference type="NCBIfam" id="NF003810">
    <property type="entry name" value="PRK05399.1"/>
    <property type="match status" value="1"/>
</dbReference>
<dbReference type="PANTHER" id="PTHR11361:SF34">
    <property type="entry name" value="DNA MISMATCH REPAIR PROTEIN MSH1, MITOCHONDRIAL"/>
    <property type="match status" value="1"/>
</dbReference>
<dbReference type="PANTHER" id="PTHR11361">
    <property type="entry name" value="DNA MISMATCH REPAIR PROTEIN MUTS FAMILY MEMBER"/>
    <property type="match status" value="1"/>
</dbReference>
<dbReference type="Pfam" id="PF01624">
    <property type="entry name" value="MutS_I"/>
    <property type="match status" value="1"/>
</dbReference>
<dbReference type="Pfam" id="PF05188">
    <property type="entry name" value="MutS_II"/>
    <property type="match status" value="1"/>
</dbReference>
<dbReference type="Pfam" id="PF05192">
    <property type="entry name" value="MutS_III"/>
    <property type="match status" value="1"/>
</dbReference>
<dbReference type="Pfam" id="PF05190">
    <property type="entry name" value="MutS_IV"/>
    <property type="match status" value="1"/>
</dbReference>
<dbReference type="Pfam" id="PF00488">
    <property type="entry name" value="MutS_V"/>
    <property type="match status" value="1"/>
</dbReference>
<dbReference type="PIRSF" id="PIRSF037677">
    <property type="entry name" value="DNA_mis_repair_Msh6"/>
    <property type="match status" value="1"/>
</dbReference>
<dbReference type="SMART" id="SM00534">
    <property type="entry name" value="MUTSac"/>
    <property type="match status" value="1"/>
</dbReference>
<dbReference type="SMART" id="SM00533">
    <property type="entry name" value="MUTSd"/>
    <property type="match status" value="1"/>
</dbReference>
<dbReference type="SUPFAM" id="SSF55271">
    <property type="entry name" value="DNA repair protein MutS, domain I"/>
    <property type="match status" value="1"/>
</dbReference>
<dbReference type="SUPFAM" id="SSF53150">
    <property type="entry name" value="DNA repair protein MutS, domain II"/>
    <property type="match status" value="1"/>
</dbReference>
<dbReference type="SUPFAM" id="SSF48334">
    <property type="entry name" value="DNA repair protein MutS, domain III"/>
    <property type="match status" value="1"/>
</dbReference>
<dbReference type="SUPFAM" id="SSF52540">
    <property type="entry name" value="P-loop containing nucleoside triphosphate hydrolases"/>
    <property type="match status" value="1"/>
</dbReference>
<dbReference type="PROSITE" id="PS00486">
    <property type="entry name" value="DNA_MISMATCH_REPAIR_2"/>
    <property type="match status" value="1"/>
</dbReference>